<gene>
    <name type="primary">ail</name>
    <name type="ordered locus">YPTB2867</name>
</gene>
<reference key="1">
    <citation type="journal article" date="1996" name="Infect. Immun.">
        <title>The psa locus is responsible for thermoinducible binding of Yersinia pseudotuberculosis to cultured cells.</title>
        <authorList>
            <person name="Yang Y."/>
            <person name="Merriam J.J."/>
            <person name="Mueller J.P."/>
            <person name="Isberg R.R."/>
        </authorList>
    </citation>
    <scope>NUCLEOTIDE SEQUENCE [GENOMIC DNA]</scope>
    <source>
        <strain>YPIII / Serotype O:3</strain>
    </source>
</reference>
<reference key="2">
    <citation type="journal article" date="2004" name="Proc. Natl. Acad. Sci. U.S.A.">
        <title>Insights into the evolution of Yersinia pestis through whole-genome comparison with Yersinia pseudotuberculosis.</title>
        <authorList>
            <person name="Chain P.S.G."/>
            <person name="Carniel E."/>
            <person name="Larimer F.W."/>
            <person name="Lamerdin J."/>
            <person name="Stoutland P.O."/>
            <person name="Regala W.M."/>
            <person name="Georgescu A.M."/>
            <person name="Vergez L.M."/>
            <person name="Land M.L."/>
            <person name="Motin V.L."/>
            <person name="Brubaker R.R."/>
            <person name="Fowler J."/>
            <person name="Hinnebusch J."/>
            <person name="Marceau M."/>
            <person name="Medigue C."/>
            <person name="Simonet M."/>
            <person name="Chenal-Francisque V."/>
            <person name="Souza B."/>
            <person name="Dacheux D."/>
            <person name="Elliott J.M."/>
            <person name="Derbise A."/>
            <person name="Hauser L.J."/>
            <person name="Garcia E."/>
        </authorList>
    </citation>
    <scope>NUCLEOTIDE SEQUENCE [LARGE SCALE GENOMIC DNA]</scope>
    <source>
        <strain>IP32953</strain>
    </source>
</reference>
<organism>
    <name type="scientific">Yersinia pseudotuberculosis serotype I (strain IP32953)</name>
    <dbReference type="NCBI Taxonomy" id="273123"/>
    <lineage>
        <taxon>Bacteria</taxon>
        <taxon>Pseudomonadati</taxon>
        <taxon>Pseudomonadota</taxon>
        <taxon>Gammaproteobacteria</taxon>
        <taxon>Enterobacterales</taxon>
        <taxon>Yersiniaceae</taxon>
        <taxon>Yersinia</taxon>
    </lineage>
</organism>
<name>AIL_YERPS</name>
<evidence type="ECO:0000250" key="1"/>
<evidence type="ECO:0000305" key="2"/>
<protein>
    <recommendedName>
        <fullName>Attachment invasion locus protein</fullName>
    </recommendedName>
</protein>
<accession>Q56957</accession>
<accession>Q667X3</accession>
<dbReference type="EMBL" id="L49439">
    <property type="protein sequence ID" value="AAB36601.1"/>
    <property type="molecule type" value="Genomic_DNA"/>
</dbReference>
<dbReference type="EMBL" id="BX936398">
    <property type="protein sequence ID" value="CAH22105.1"/>
    <property type="molecule type" value="Genomic_DNA"/>
</dbReference>
<dbReference type="RefSeq" id="WP_011192817.1">
    <property type="nucleotide sequence ID" value="NC_006155.1"/>
</dbReference>
<dbReference type="BMRB" id="Q56957"/>
<dbReference type="SMR" id="Q56957"/>
<dbReference type="GeneID" id="49785124"/>
<dbReference type="KEGG" id="yps:YPTB2867"/>
<dbReference type="Proteomes" id="UP000001011">
    <property type="component" value="Chromosome"/>
</dbReference>
<dbReference type="GO" id="GO:0009279">
    <property type="term" value="C:cell outer membrane"/>
    <property type="evidence" value="ECO:0007669"/>
    <property type="project" value="UniProtKB-SubCell"/>
</dbReference>
<dbReference type="GO" id="GO:0044384">
    <property type="term" value="C:host outer membrane"/>
    <property type="evidence" value="ECO:0007669"/>
    <property type="project" value="InterPro"/>
</dbReference>
<dbReference type="Gene3D" id="2.40.160.20">
    <property type="match status" value="1"/>
</dbReference>
<dbReference type="InterPro" id="IPR051723">
    <property type="entry name" value="Bact_OM_Invasion-Related"/>
</dbReference>
<dbReference type="InterPro" id="IPR000758">
    <property type="entry name" value="Enterovir_OMP"/>
</dbReference>
<dbReference type="InterPro" id="IPR011250">
    <property type="entry name" value="OMP/PagP_b-brl"/>
</dbReference>
<dbReference type="InterPro" id="IPR027385">
    <property type="entry name" value="OMP_b-brl"/>
</dbReference>
<dbReference type="PANTHER" id="PTHR35892:SF2">
    <property type="entry name" value="OUTER MEMBRANE PROTEIN PAGN"/>
    <property type="match status" value="1"/>
</dbReference>
<dbReference type="PANTHER" id="PTHR35892">
    <property type="entry name" value="OUTER MEMBRANE PROTEIN PAGN-RELATED"/>
    <property type="match status" value="1"/>
</dbReference>
<dbReference type="Pfam" id="PF13505">
    <property type="entry name" value="OMP_b-brl"/>
    <property type="match status" value="1"/>
</dbReference>
<dbReference type="PRINTS" id="PR00316">
    <property type="entry name" value="ENTEROVIROMP"/>
</dbReference>
<dbReference type="SUPFAM" id="SSF56925">
    <property type="entry name" value="OMPA-like"/>
    <property type="match status" value="1"/>
</dbReference>
<dbReference type="PROSITE" id="PS00694">
    <property type="entry name" value="ENT_VIR_OMP_1"/>
    <property type="match status" value="1"/>
</dbReference>
<dbReference type="PROSITE" id="PS00695">
    <property type="entry name" value="ENT_VIR_OMP_2"/>
    <property type="match status" value="1"/>
</dbReference>
<feature type="signal peptide" evidence="1">
    <location>
        <begin position="1"/>
        <end position="26"/>
    </location>
</feature>
<feature type="chain" id="PRO_0000020198" description="Attachment invasion locus protein">
    <location>
        <begin position="27"/>
        <end position="182"/>
    </location>
</feature>
<feature type="sequence conflict" description="In Ref. 1; AAB36601." evidence="2" ref="1">
    <original>T</original>
    <variation>I</variation>
    <location>
        <position position="7"/>
    </location>
</feature>
<feature type="sequence conflict" description="In Ref. 1; AAB36601." evidence="2" ref="1">
    <original>E</original>
    <variation>D</variation>
    <location>
        <position position="43"/>
    </location>
</feature>
<comment type="function">
    <text evidence="1">Promotes the invasion of pathogenic bacteria into eukaryotic cells by an unknown mechanism.</text>
</comment>
<comment type="subcellular location">
    <subcellularLocation>
        <location evidence="1">Cell outer membrane</location>
        <topology evidence="1">Multi-pass membrane protein</topology>
    </subcellularLocation>
</comment>
<comment type="similarity">
    <text evidence="2">Belongs to the outer membrane OOP (TC 1.B.6) superfamily. Ail family.</text>
</comment>
<sequence>MVFMNKTLLVSSLIACLSIASVNVYAEGESSISIGYAQSRVKEDGYKLDKNPRGFNLKYRYEFNNDWGVIGSFAQTRRGFEESVDGFKLIDGDFKYYSVTAGPVFRINEYVSLYGLLGAGHGKAKVSSIFGQSESRSKTSLAYGAGLQFNPHPNFVIDASYEYSKLDDVKVGTWMLGAGYRF</sequence>
<proteinExistence type="inferred from homology"/>
<keyword id="KW-0998">Cell outer membrane</keyword>
<keyword id="KW-0472">Membrane</keyword>
<keyword id="KW-0732">Signal</keyword>
<keyword id="KW-0812">Transmembrane</keyword>
<keyword id="KW-1134">Transmembrane beta strand</keyword>
<keyword id="KW-0843">Virulence</keyword>